<sequence>MKILYSLRRFYHVETLFNGTFVLAGRDQETTGFAWWAGNARLINLSGKLLGAHVAHAGLIVFWAGAMNLFEVAHFVPEKPMYEQGLILLPHLATLGWGVGPGGEVLDTFPYFVSGVLHLISSAVLGFGGIYHALLGPETLEESFPFFGYVWKDRNKMTTILGIHLILLGLGAFLLVLKALYFGGVYDTWAPGGGDVRKITNLTLSPSVIFGYLLKSPFGGEGWIVSVDDLEDIIGGHVWLGFICVFGGIWHILTKPFAWARRAFVWSGEAYLSYSLAALSVFGFIACCFVWFNNTAYPSEFYGPTGPEASQAQAFTFLVRDQRLGANVGSAQGPTGLGKYLMRSPTGEVIFGGETMRFWDLRAPWLEPLRGPNGLDLSRLKKDIQPWQERRSAEYMTHAPLGSLNSVGGVATEINAVNYVSPRSWLSTSHFVLGFFFFVGHLWHAGRARAAAAGFEKGIDRDLEPVLYMNPLN</sequence>
<evidence type="ECO:0000255" key="1">
    <source>
        <dbReference type="HAMAP-Rule" id="MF_01496"/>
    </source>
</evidence>
<evidence type="ECO:0000303" key="2">
    <source>
    </source>
</evidence>
<evidence type="ECO:0000305" key="3"/>
<proteinExistence type="inferred from homology"/>
<comment type="function">
    <text evidence="1">One of the components of the core complex of photosystem II (PSII). It binds chlorophyll and helps catalyze the primary light-induced photochemical processes of PSII. PSII is a light-driven water:plastoquinone oxidoreductase, using light energy to abstract electrons from H(2)O, generating O(2) and a proton gradient subsequently used for ATP formation.</text>
</comment>
<comment type="cofactor">
    <text evidence="1">Binds multiple chlorophylls and provides some of the ligands for the Ca-4Mn-5O cluster of the oxygen-evolving complex. It may also provide a ligand for a Cl- that is required for oxygen evolution. PSII binds additional chlorophylls, carotenoids and specific lipids.</text>
</comment>
<comment type="subunit">
    <text evidence="1">PSII is composed of 1 copy each of membrane proteins PsbA, PsbB, PsbC, PsbD, PsbE, PsbF, PsbH, PsbI, PsbJ, PsbK, PsbL, PsbM, PsbT, PsbX, PsbY, PsbZ, Psb30/Ycf12, at least 3 peripheral proteins of the oxygen-evolving complex and a large number of cofactors. It forms dimeric complexes.</text>
</comment>
<comment type="subcellular location">
    <subcellularLocation>
        <location evidence="1">Plastid</location>
        <location evidence="1">Chloroplast thylakoid membrane</location>
        <topology evidence="1">Multi-pass membrane protein</topology>
    </subcellularLocation>
</comment>
<comment type="similarity">
    <text evidence="1">Belongs to the PsbB/PsbC family. PsbC subfamily.</text>
</comment>
<reference key="1">
    <citation type="journal article" date="1988" name="Carlsberg Res. Commun.">
        <title>Primary structure of barley genes encoding quinone and chlorophyll a binding proteins of photosystem II.</title>
        <authorList>
            <person name="Neumann E.M."/>
        </authorList>
    </citation>
    <scope>NUCLEOTIDE SEQUENCE [GENOMIC DNA]</scope>
</reference>
<reference key="2">
    <citation type="journal article" date="1991" name="Bioorg. Khim.">
        <title>Photosystem II of rye. Nucleotide sequence of the psbB, psbC, psbE, psbF, psbH genes of rye and chloroplast DNA regions adjacent to them.</title>
        <authorList>
            <person name="Efimov V.A."/>
            <person name="Andreeva A.V."/>
            <person name="Reverdatto S.V."/>
            <person name="Chakhmakhcheva O.G."/>
        </authorList>
    </citation>
    <scope>NUCLEOTIDE SEQUENCE [GENOMIC DNA]</scope>
</reference>
<reference key="3">
    <citation type="journal article" date="2007" name="Theor. Appl. Genet.">
        <title>Complete chloroplast genome sequences of Hordeum vulgare, Sorghum bicolor and Agrostis stolonifera, and comparative analyses with other grass genomes.</title>
        <authorList>
            <person name="Saski C."/>
            <person name="Lee S.-B."/>
            <person name="Fjellheim S."/>
            <person name="Guda C."/>
            <person name="Jansen R.K."/>
            <person name="Luo H."/>
            <person name="Tomkins J."/>
            <person name="Rognli O.A."/>
            <person name="Daniell H."/>
            <person name="Clarke J.L."/>
        </authorList>
    </citation>
    <scope>NUCLEOTIDE SEQUENCE [LARGE SCALE GENOMIC DNA]</scope>
    <source>
        <strain>cv. Morex</strain>
    </source>
</reference>
<reference key="4">
    <citation type="journal article" date="1989" name="Nucleic Acids Res.">
        <title>Nucleotide sequence of the barley chloroplast psbC gene.</title>
        <authorList>
            <person name="Reverdano S.V."/>
            <person name="Andreeva A.V."/>
            <person name="Buryakova A.A."/>
            <person name="Chakhmakhcheva O.G."/>
            <person name="Efimov V.A."/>
        </authorList>
    </citation>
    <scope>NUCLEOTIDE SEQUENCE [GENOMIC DNA] OF 1-309</scope>
    <source>
        <strain>cv. Sabarlis</strain>
    </source>
</reference>
<reference key="5">
    <citation type="journal article" date="1988" name="Nucleic Acids Res.">
        <title>Nucleotide sequence of the barley chloroplast psbD gene for the D2 protein of photosystem II.</title>
        <authorList>
            <person name="Efimov V.A."/>
            <person name="Andreeva A.V."/>
            <person name="Reverdatto S.V."/>
            <person name="Chakhmakhcheva O.G."/>
        </authorList>
    </citation>
    <scope>NUCLEOTIDE SEQUENCE [GENOMIC DNA] OF 1-52</scope>
    <source>
        <strain>cv. Donetsky 6</strain>
    </source>
</reference>
<organism>
    <name type="scientific">Hordeum vulgare</name>
    <name type="common">Barley</name>
    <dbReference type="NCBI Taxonomy" id="4513"/>
    <lineage>
        <taxon>Eukaryota</taxon>
        <taxon>Viridiplantae</taxon>
        <taxon>Streptophyta</taxon>
        <taxon>Embryophyta</taxon>
        <taxon>Tracheophyta</taxon>
        <taxon>Spermatophyta</taxon>
        <taxon>Magnoliopsida</taxon>
        <taxon>Liliopsida</taxon>
        <taxon>Poales</taxon>
        <taxon>Poaceae</taxon>
        <taxon>BOP clade</taxon>
        <taxon>Pooideae</taxon>
        <taxon>Triticodae</taxon>
        <taxon>Triticeae</taxon>
        <taxon>Hordeinae</taxon>
        <taxon>Hordeum</taxon>
    </lineage>
</organism>
<geneLocation type="chloroplast"/>
<name>PSBC_HORVU</name>
<accession>P11095</accession>
<accession>A1E9H7</accession>
<dbReference type="EMBL" id="EF115541">
    <property type="protein sequence ID" value="ABK79399.1"/>
    <property type="molecule type" value="Genomic_DNA"/>
</dbReference>
<dbReference type="EMBL" id="X14106">
    <property type="protein sequence ID" value="CAA32263.1"/>
    <property type="molecule type" value="Genomic_DNA"/>
</dbReference>
<dbReference type="EMBL" id="X07522">
    <property type="protein sequence ID" value="CAA30402.1"/>
    <property type="molecule type" value="Genomic_DNA"/>
</dbReference>
<dbReference type="PIR" id="JN0346">
    <property type="entry name" value="JN0346"/>
</dbReference>
<dbReference type="RefSeq" id="YP_010144411.1">
    <property type="nucleotide sequence ID" value="NC_056985.1"/>
</dbReference>
<dbReference type="RefSeq" id="YP_874639.1">
    <property type="nucleotide sequence ID" value="NC_008590.1"/>
</dbReference>
<dbReference type="SMR" id="P11095"/>
<dbReference type="GeneID" id="4525152"/>
<dbReference type="GeneID" id="67140653"/>
<dbReference type="OMA" id="FIWNGEA"/>
<dbReference type="GO" id="GO:0009535">
    <property type="term" value="C:chloroplast thylakoid membrane"/>
    <property type="evidence" value="ECO:0007669"/>
    <property type="project" value="UniProtKB-SubCell"/>
</dbReference>
<dbReference type="GO" id="GO:0009523">
    <property type="term" value="C:photosystem II"/>
    <property type="evidence" value="ECO:0007669"/>
    <property type="project" value="UniProtKB-KW"/>
</dbReference>
<dbReference type="GO" id="GO:0016168">
    <property type="term" value="F:chlorophyll binding"/>
    <property type="evidence" value="ECO:0007669"/>
    <property type="project" value="UniProtKB-UniRule"/>
</dbReference>
<dbReference type="GO" id="GO:0045156">
    <property type="term" value="F:electron transporter, transferring electrons within the cyclic electron transport pathway of photosynthesis activity"/>
    <property type="evidence" value="ECO:0007669"/>
    <property type="project" value="InterPro"/>
</dbReference>
<dbReference type="GO" id="GO:0046872">
    <property type="term" value="F:metal ion binding"/>
    <property type="evidence" value="ECO:0007669"/>
    <property type="project" value="UniProtKB-KW"/>
</dbReference>
<dbReference type="GO" id="GO:0009772">
    <property type="term" value="P:photosynthetic electron transport in photosystem II"/>
    <property type="evidence" value="ECO:0007669"/>
    <property type="project" value="InterPro"/>
</dbReference>
<dbReference type="FunFam" id="1.10.10.670:FF:000001">
    <property type="entry name" value="Photosystem II CP43 reaction center protein"/>
    <property type="match status" value="1"/>
</dbReference>
<dbReference type="Gene3D" id="1.10.10.670">
    <property type="entry name" value="photosystem ii from thermosynechococcus elongatus"/>
    <property type="match status" value="1"/>
</dbReference>
<dbReference type="HAMAP" id="MF_01496">
    <property type="entry name" value="PSII_PsbC_CP43"/>
    <property type="match status" value="1"/>
</dbReference>
<dbReference type="InterPro" id="IPR000932">
    <property type="entry name" value="PS_antenna-like"/>
</dbReference>
<dbReference type="InterPro" id="IPR036001">
    <property type="entry name" value="PS_II_antenna-like_sf"/>
</dbReference>
<dbReference type="InterPro" id="IPR005869">
    <property type="entry name" value="PSII_PsbC"/>
</dbReference>
<dbReference type="InterPro" id="IPR044900">
    <property type="entry name" value="PSII_PsbC_sf"/>
</dbReference>
<dbReference type="NCBIfam" id="TIGR01153">
    <property type="entry name" value="psbC"/>
    <property type="match status" value="1"/>
</dbReference>
<dbReference type="Pfam" id="PF00421">
    <property type="entry name" value="PSII"/>
    <property type="match status" value="1"/>
</dbReference>
<dbReference type="SUPFAM" id="SSF161077">
    <property type="entry name" value="Photosystem II antenna protein-like"/>
    <property type="match status" value="1"/>
</dbReference>
<gene>
    <name evidence="1" type="primary">psbC</name>
</gene>
<keyword id="KW-0007">Acetylation</keyword>
<keyword id="KW-0148">Chlorophyll</keyword>
<keyword id="KW-0150">Chloroplast</keyword>
<keyword id="KW-0157">Chromophore</keyword>
<keyword id="KW-0464">Manganese</keyword>
<keyword id="KW-0472">Membrane</keyword>
<keyword id="KW-0479">Metal-binding</keyword>
<keyword id="KW-0597">Phosphoprotein</keyword>
<keyword id="KW-0602">Photosynthesis</keyword>
<keyword id="KW-0604">Photosystem II</keyword>
<keyword id="KW-0934">Plastid</keyword>
<keyword id="KW-0793">Thylakoid</keyword>
<keyword id="KW-0812">Transmembrane</keyword>
<keyword id="KW-1133">Transmembrane helix</keyword>
<protein>
    <recommendedName>
        <fullName evidence="1">Photosystem II CP43 reaction center protein</fullName>
    </recommendedName>
    <alternativeName>
        <fullName evidence="1">PSII 43 kDa protein</fullName>
    </alternativeName>
    <alternativeName>
        <fullName evidence="1">Protein CP-43</fullName>
    </alternativeName>
    <alternativeName>
        <fullName evidence="2">Protein P6</fullName>
    </alternativeName>
</protein>
<feature type="propeptide" id="PRO_0000431151" evidence="1">
    <location>
        <begin position="1"/>
        <end position="14"/>
    </location>
</feature>
<feature type="chain" id="PRO_0000077516" description="Photosystem II CP43 reaction center protein" evidence="1">
    <location>
        <begin position="15"/>
        <end position="473"/>
    </location>
</feature>
<feature type="transmembrane region" description="Helical" evidence="1">
    <location>
        <begin position="69"/>
        <end position="93"/>
    </location>
</feature>
<feature type="transmembrane region" description="Helical" evidence="1">
    <location>
        <begin position="134"/>
        <end position="155"/>
    </location>
</feature>
<feature type="transmembrane region" description="Helical" evidence="1">
    <location>
        <begin position="178"/>
        <end position="200"/>
    </location>
</feature>
<feature type="transmembrane region" description="Helical" evidence="1">
    <location>
        <begin position="255"/>
        <end position="275"/>
    </location>
</feature>
<feature type="transmembrane region" description="Helical" evidence="1">
    <location>
        <begin position="291"/>
        <end position="312"/>
    </location>
</feature>
<feature type="transmembrane region" description="Helical" evidence="1">
    <location>
        <begin position="447"/>
        <end position="471"/>
    </location>
</feature>
<feature type="binding site" evidence="1">
    <location>
        <position position="367"/>
    </location>
    <ligand>
        <name>[CaMn4O5] cluster</name>
        <dbReference type="ChEBI" id="CHEBI:189552"/>
    </ligand>
</feature>
<feature type="modified residue" description="N-acetylthreonine" evidence="1">
    <location>
        <position position="15"/>
    </location>
</feature>
<feature type="modified residue" description="Phosphothreonine" evidence="1">
    <location>
        <position position="15"/>
    </location>
</feature>
<feature type="sequence conflict" description="In Ref. 4; CAA32263." evidence="3" ref="4">
    <original>T</original>
    <variation>R</variation>
    <location>
        <position position="254"/>
    </location>
</feature>
<feature type="sequence conflict" description="In Ref. 4; CAA32263." evidence="3" ref="4">
    <original>F</original>
    <variation>L</variation>
    <location>
        <position position="257"/>
    </location>
</feature>
<feature type="sequence conflict" description="In Ref. 1; no nucleotide entry." evidence="3" ref="1">
    <original>M</original>
    <variation>I</variation>
    <location>
        <position position="342"/>
    </location>
</feature>